<protein>
    <recommendedName>
        <fullName>G-protein coupled receptor homolog R33</fullName>
    </recommendedName>
</protein>
<organismHost>
    <name type="scientific">Rattus</name>
    <dbReference type="NCBI Taxonomy" id="10114"/>
</organismHost>
<sequence>MDVLLGTEELEDELHQLHFNYTCVPSLGLSVARDAETAVNFLIVLVGGPMNFLVLATQMLSNRSYSVSTPTLYMTNLYLANLLTVATLPFLMLSNRGLVGSSPEGCKIAALAYYATCTAGFATLMLIAINRYRVIHQRTRSGAGSKRQTYAVLAVTWLASLMCASPAPLYATVMAHDSADALAFETCIIYFSYDQVKTVLATFKILITMIWGITPVVMMSWFYVFFYRRLKLTSYRRRSQTLTFVTTLMLSFLVVQTPFVAIMSYDSYGVLNWPINCDTINKRDAVSMLARVVPNFHCLLNPVLYAFLGRDFNKRFILCISGKLFSRRRALRERAGLGAQIVGPVCALPSKTVTLSEETRDLSQEIRRLRALGRPPPPPPPPPPPNC</sequence>
<organism>
    <name type="scientific">Rat cytomegalovirus (strain Maastricht)</name>
    <dbReference type="NCBI Taxonomy" id="79700"/>
    <lineage>
        <taxon>Viruses</taxon>
        <taxon>Duplodnaviria</taxon>
        <taxon>Heunggongvirae</taxon>
        <taxon>Peploviricota</taxon>
        <taxon>Herviviricetes</taxon>
        <taxon>Herpesvirales</taxon>
        <taxon>Orthoherpesviridae</taxon>
        <taxon>Betaherpesvirinae</taxon>
        <taxon>Muromegalovirus</taxon>
        <taxon>Muromegalovirus muridbeta2</taxon>
        <taxon>Murid betaherpesvirus 2</taxon>
    </lineage>
</organism>
<keyword id="KW-0297">G-protein coupled receptor</keyword>
<keyword id="KW-0325">Glycoprotein</keyword>
<keyword id="KW-1032">Host cell membrane</keyword>
<keyword id="KW-1043">Host membrane</keyword>
<keyword id="KW-0472">Membrane</keyword>
<keyword id="KW-0675">Receptor</keyword>
<keyword id="KW-1185">Reference proteome</keyword>
<keyword id="KW-0807">Transducer</keyword>
<keyword id="KW-0812">Transmembrane</keyword>
<keyword id="KW-1133">Transmembrane helix</keyword>
<dbReference type="EMBL" id="AF232689">
    <property type="protein sequence ID" value="AAC58815.1"/>
    <property type="molecule type" value="Genomic_DNA"/>
</dbReference>
<dbReference type="RefSeq" id="NP_064138.1">
    <property type="nucleotide sequence ID" value="NC_002512.2"/>
</dbReference>
<dbReference type="SMR" id="O12000"/>
<dbReference type="GeneID" id="940282"/>
<dbReference type="KEGG" id="vg:940282"/>
<dbReference type="OrthoDB" id="15216at10239"/>
<dbReference type="Proteomes" id="UP000008288">
    <property type="component" value="Genome"/>
</dbReference>
<dbReference type="GO" id="GO:0020002">
    <property type="term" value="C:host cell plasma membrane"/>
    <property type="evidence" value="ECO:0007669"/>
    <property type="project" value="UniProtKB-SubCell"/>
</dbReference>
<dbReference type="GO" id="GO:0016020">
    <property type="term" value="C:membrane"/>
    <property type="evidence" value="ECO:0007669"/>
    <property type="project" value="UniProtKB-KW"/>
</dbReference>
<dbReference type="GO" id="GO:0019957">
    <property type="term" value="F:C-C chemokine binding"/>
    <property type="evidence" value="ECO:0007669"/>
    <property type="project" value="TreeGrafter"/>
</dbReference>
<dbReference type="GO" id="GO:0016493">
    <property type="term" value="F:C-C chemokine receptor activity"/>
    <property type="evidence" value="ECO:0007669"/>
    <property type="project" value="TreeGrafter"/>
</dbReference>
<dbReference type="GO" id="GO:0019722">
    <property type="term" value="P:calcium-mediated signaling"/>
    <property type="evidence" value="ECO:0007669"/>
    <property type="project" value="TreeGrafter"/>
</dbReference>
<dbReference type="GO" id="GO:0060326">
    <property type="term" value="P:cell chemotaxis"/>
    <property type="evidence" value="ECO:0007669"/>
    <property type="project" value="TreeGrafter"/>
</dbReference>
<dbReference type="GO" id="GO:0006955">
    <property type="term" value="P:immune response"/>
    <property type="evidence" value="ECO:0007669"/>
    <property type="project" value="TreeGrafter"/>
</dbReference>
<dbReference type="GO" id="GO:0007204">
    <property type="term" value="P:positive regulation of cytosolic calcium ion concentration"/>
    <property type="evidence" value="ECO:0007669"/>
    <property type="project" value="TreeGrafter"/>
</dbReference>
<dbReference type="Gene3D" id="1.20.1070.10">
    <property type="entry name" value="Rhodopsin 7-helix transmembrane proteins"/>
    <property type="match status" value="1"/>
</dbReference>
<dbReference type="InterPro" id="IPR050119">
    <property type="entry name" value="CCR1-9-like"/>
</dbReference>
<dbReference type="InterPro" id="IPR000276">
    <property type="entry name" value="GPCR_Rhodpsn"/>
</dbReference>
<dbReference type="InterPro" id="IPR017452">
    <property type="entry name" value="GPCR_Rhodpsn_7TM"/>
</dbReference>
<dbReference type="PANTHER" id="PTHR10489:SF735">
    <property type="entry name" value="C-C CHEMOKINE RECEPTOR TYPE 10"/>
    <property type="match status" value="1"/>
</dbReference>
<dbReference type="PANTHER" id="PTHR10489">
    <property type="entry name" value="CELL ADHESION MOLECULE"/>
    <property type="match status" value="1"/>
</dbReference>
<dbReference type="Pfam" id="PF00001">
    <property type="entry name" value="7tm_1"/>
    <property type="match status" value="1"/>
</dbReference>
<dbReference type="PRINTS" id="PR00237">
    <property type="entry name" value="GPCRRHODOPSN"/>
</dbReference>
<dbReference type="SUPFAM" id="SSF81321">
    <property type="entry name" value="Family A G protein-coupled receptor-like"/>
    <property type="match status" value="1"/>
</dbReference>
<dbReference type="PROSITE" id="PS00237">
    <property type="entry name" value="G_PROTEIN_RECEP_F1_1"/>
    <property type="match status" value="1"/>
</dbReference>
<dbReference type="PROSITE" id="PS50262">
    <property type="entry name" value="G_PROTEIN_RECEP_F1_2"/>
    <property type="match status" value="1"/>
</dbReference>
<name>UL33_RCMVM</name>
<reference key="1">
    <citation type="journal article" date="1998" name="J. Virol.">
        <title>The R33 G protein-coupled receptor gene of rat cytomegalovirus plays an essential role in the pathogenesis of viral infection.</title>
        <authorList>
            <person name="Beisser P.S."/>
            <person name="Vink C."/>
            <person name="Van Dam J.G."/>
            <person name="Grauls G."/>
            <person name="Vanherle S.J."/>
            <person name="Bruggeman C.A."/>
        </authorList>
    </citation>
    <scope>NUCLEOTIDE SEQUENCE [GENOMIC DNA]</scope>
</reference>
<reference key="2">
    <citation type="journal article" date="2000" name="J. Virol.">
        <title>Complete DNA sequence of the rat cytomegalovirus genome.</title>
        <authorList>
            <person name="Vink C."/>
            <person name="Beuken E."/>
            <person name="Bruggeman C.A."/>
        </authorList>
    </citation>
    <scope>NUCLEOTIDE SEQUENCE [GENOMIC DNA]</scope>
</reference>
<evidence type="ECO:0000255" key="1"/>
<evidence type="ECO:0000255" key="2">
    <source>
        <dbReference type="PROSITE-ProRule" id="PRU00521"/>
    </source>
</evidence>
<evidence type="ECO:0000256" key="3">
    <source>
        <dbReference type="SAM" id="MobiDB-lite"/>
    </source>
</evidence>
<comment type="function">
    <text>Plays an important role in vivo, in particular in the dissemination to or replication in the salivary gland.</text>
</comment>
<comment type="subcellular location">
    <subcellularLocation>
        <location>Host cell membrane</location>
        <topology>Multi-pass membrane protein</topology>
    </subcellularLocation>
</comment>
<comment type="similarity">
    <text evidence="2">Belongs to the G-protein coupled receptor 1 family.</text>
</comment>
<accession>O12000</accession>
<feature type="chain" id="PRO_0000070244" description="G-protein coupled receptor homolog R33">
    <location>
        <begin position="1"/>
        <end position="387"/>
    </location>
</feature>
<feature type="topological domain" description="Extracellular" evidence="1">
    <location>
        <begin position="1"/>
        <end position="33"/>
    </location>
</feature>
<feature type="transmembrane region" description="Helical; Name=1" evidence="1">
    <location>
        <begin position="34"/>
        <end position="61"/>
    </location>
</feature>
<feature type="topological domain" description="Cytoplasmic" evidence="1">
    <location>
        <begin position="62"/>
        <end position="71"/>
    </location>
</feature>
<feature type="transmembrane region" description="Helical; Name=2" evidence="1">
    <location>
        <begin position="72"/>
        <end position="94"/>
    </location>
</feature>
<feature type="topological domain" description="Extracellular" evidence="1">
    <location>
        <begin position="95"/>
        <end position="107"/>
    </location>
</feature>
<feature type="transmembrane region" description="Helical; Name=3" evidence="1">
    <location>
        <begin position="108"/>
        <end position="129"/>
    </location>
</feature>
<feature type="topological domain" description="Cytoplasmic" evidence="1">
    <location>
        <begin position="130"/>
        <end position="150"/>
    </location>
</feature>
<feature type="transmembrane region" description="Helical; Name=4" evidence="1">
    <location>
        <begin position="151"/>
        <end position="169"/>
    </location>
</feature>
<feature type="topological domain" description="Extracellular" evidence="1">
    <location>
        <begin position="170"/>
        <end position="204"/>
    </location>
</feature>
<feature type="transmembrane region" description="Helical; Name=5" evidence="1">
    <location>
        <begin position="205"/>
        <end position="224"/>
    </location>
</feature>
<feature type="topological domain" description="Cytoplasmic" evidence="1">
    <location>
        <begin position="225"/>
        <end position="244"/>
    </location>
</feature>
<feature type="transmembrane region" description="Helical; Name=6" evidence="1">
    <location>
        <begin position="245"/>
        <end position="268"/>
    </location>
</feature>
<feature type="topological domain" description="Extracellular" evidence="1">
    <location>
        <begin position="269"/>
        <end position="285"/>
    </location>
</feature>
<feature type="transmembrane region" description="Helical; Name=7" evidence="1">
    <location>
        <begin position="286"/>
        <end position="309"/>
    </location>
</feature>
<feature type="topological domain" description="Cytoplasmic" evidence="1">
    <location>
        <begin position="310"/>
        <end position="387"/>
    </location>
</feature>
<feature type="region of interest" description="Disordered" evidence="3">
    <location>
        <begin position="368"/>
        <end position="387"/>
    </location>
</feature>
<feature type="compositionally biased region" description="Pro residues" evidence="3">
    <location>
        <begin position="374"/>
        <end position="387"/>
    </location>
</feature>
<feature type="glycosylation site" description="N-linked (GlcNAc...) asparagine; by host" evidence="1">
    <location>
        <position position="20"/>
    </location>
</feature>
<proteinExistence type="inferred from homology"/>